<evidence type="ECO:0000255" key="1">
    <source>
        <dbReference type="HAMAP-Rule" id="MF_00219"/>
    </source>
</evidence>
<sequence length="344" mass="37310">MQTISLIRPDDWHLHVRDGAALATVVPHTARRFGRALIMPNLRPPVTTAAQALEYRARILAAVPPGQHFEPLMSLYLTDNTSPDEIDRAKASGAVVAVKLYPAGATTNSDAGVTAIEKVHAVLERMEKLGMVLCVHGEVTHGDVDVFDREQVFIEQVLAPLVARFPALRVVFEHITTAEAARFVQDAGPNVAATVTAHHLLLNRNAIFAGGIRPHHYCLPVLKRETHRRALVEAATSGNAKFFLGTDSAPHSRAAKETACGCAGCYTAHAAIELYAEAFEQAGALDRLEAFASLNGPAFYGLAPNAERITLAKDAWEVPGEYEYLHDDPLVPLRAGETVAWRVL</sequence>
<proteinExistence type="inferred from homology"/>
<accession>Q5P6Y5</accession>
<feature type="chain" id="PRO_0000325570" description="Dihydroorotase">
    <location>
        <begin position="1"/>
        <end position="344"/>
    </location>
</feature>
<feature type="active site" evidence="1">
    <location>
        <position position="247"/>
    </location>
</feature>
<feature type="binding site" evidence="1">
    <location>
        <position position="13"/>
    </location>
    <ligand>
        <name>Zn(2+)</name>
        <dbReference type="ChEBI" id="CHEBI:29105"/>
        <label>1</label>
    </ligand>
</feature>
<feature type="binding site" evidence="1">
    <location>
        <begin position="15"/>
        <end position="17"/>
    </location>
    <ligand>
        <name>substrate</name>
    </ligand>
</feature>
<feature type="binding site" evidence="1">
    <location>
        <position position="15"/>
    </location>
    <ligand>
        <name>Zn(2+)</name>
        <dbReference type="ChEBI" id="CHEBI:29105"/>
        <label>1</label>
    </ligand>
</feature>
<feature type="binding site" evidence="1">
    <location>
        <position position="41"/>
    </location>
    <ligand>
        <name>substrate</name>
    </ligand>
</feature>
<feature type="binding site" description="via carbamate group" evidence="1">
    <location>
        <position position="99"/>
    </location>
    <ligand>
        <name>Zn(2+)</name>
        <dbReference type="ChEBI" id="CHEBI:29105"/>
        <label>1</label>
    </ligand>
</feature>
<feature type="binding site" description="via carbamate group" evidence="1">
    <location>
        <position position="99"/>
    </location>
    <ligand>
        <name>Zn(2+)</name>
        <dbReference type="ChEBI" id="CHEBI:29105"/>
        <label>2</label>
    </ligand>
</feature>
<feature type="binding site" evidence="1">
    <location>
        <position position="136"/>
    </location>
    <ligand>
        <name>substrate</name>
    </ligand>
</feature>
<feature type="binding site" evidence="1">
    <location>
        <position position="136"/>
    </location>
    <ligand>
        <name>Zn(2+)</name>
        <dbReference type="ChEBI" id="CHEBI:29105"/>
        <label>2</label>
    </ligand>
</feature>
<feature type="binding site" evidence="1">
    <location>
        <position position="174"/>
    </location>
    <ligand>
        <name>Zn(2+)</name>
        <dbReference type="ChEBI" id="CHEBI:29105"/>
        <label>2</label>
    </ligand>
</feature>
<feature type="binding site" evidence="1">
    <location>
        <position position="219"/>
    </location>
    <ligand>
        <name>substrate</name>
    </ligand>
</feature>
<feature type="binding site" evidence="1">
    <location>
        <position position="247"/>
    </location>
    <ligand>
        <name>Zn(2+)</name>
        <dbReference type="ChEBI" id="CHEBI:29105"/>
        <label>1</label>
    </ligand>
</feature>
<feature type="binding site" evidence="1">
    <location>
        <position position="251"/>
    </location>
    <ligand>
        <name>substrate</name>
    </ligand>
</feature>
<feature type="binding site" evidence="1">
    <location>
        <position position="263"/>
    </location>
    <ligand>
        <name>substrate</name>
    </ligand>
</feature>
<feature type="modified residue" description="N6-carboxylysine" evidence="1">
    <location>
        <position position="99"/>
    </location>
</feature>
<gene>
    <name evidence="1" type="primary">pyrC</name>
    <name type="ordered locus">AZOSEA08010</name>
    <name type="ORF">ebA1456</name>
</gene>
<organism>
    <name type="scientific">Aromatoleum aromaticum (strain DSM 19018 / LMG 30748 / EbN1)</name>
    <name type="common">Azoarcus sp. (strain EbN1)</name>
    <dbReference type="NCBI Taxonomy" id="76114"/>
    <lineage>
        <taxon>Bacteria</taxon>
        <taxon>Pseudomonadati</taxon>
        <taxon>Pseudomonadota</taxon>
        <taxon>Betaproteobacteria</taxon>
        <taxon>Rhodocyclales</taxon>
        <taxon>Rhodocyclaceae</taxon>
        <taxon>Aromatoleum</taxon>
    </lineage>
</organism>
<protein>
    <recommendedName>
        <fullName evidence="1">Dihydroorotase</fullName>
        <shortName evidence="1">DHOase</shortName>
        <ecNumber evidence="1">3.5.2.3</ecNumber>
    </recommendedName>
</protein>
<reference key="1">
    <citation type="journal article" date="2005" name="Arch. Microbiol.">
        <title>The genome sequence of an anaerobic aromatic-degrading denitrifying bacterium, strain EbN1.</title>
        <authorList>
            <person name="Rabus R."/>
            <person name="Kube M."/>
            <person name="Heider J."/>
            <person name="Beck A."/>
            <person name="Heitmann K."/>
            <person name="Widdel F."/>
            <person name="Reinhardt R."/>
        </authorList>
    </citation>
    <scope>NUCLEOTIDE SEQUENCE [LARGE SCALE GENOMIC DNA]</scope>
    <source>
        <strain>DSM 19018 / LMG 30748 / EbN1</strain>
    </source>
</reference>
<keyword id="KW-0378">Hydrolase</keyword>
<keyword id="KW-0479">Metal-binding</keyword>
<keyword id="KW-0665">Pyrimidine biosynthesis</keyword>
<keyword id="KW-1185">Reference proteome</keyword>
<keyword id="KW-0862">Zinc</keyword>
<dbReference type="EC" id="3.5.2.3" evidence="1"/>
<dbReference type="EMBL" id="CR555306">
    <property type="protein sequence ID" value="CAI06926.1"/>
    <property type="molecule type" value="Genomic_DNA"/>
</dbReference>
<dbReference type="RefSeq" id="WP_011236652.1">
    <property type="nucleotide sequence ID" value="NC_006513.1"/>
</dbReference>
<dbReference type="SMR" id="Q5P6Y5"/>
<dbReference type="STRING" id="76114.ebA1456"/>
<dbReference type="MEROPS" id="M38.A02"/>
<dbReference type="KEGG" id="eba:ebA1456"/>
<dbReference type="eggNOG" id="COG0418">
    <property type="taxonomic scope" value="Bacteria"/>
</dbReference>
<dbReference type="HOGENOM" id="CLU_041558_1_0_4"/>
<dbReference type="OrthoDB" id="9808095at2"/>
<dbReference type="UniPathway" id="UPA00070">
    <property type="reaction ID" value="UER00117"/>
</dbReference>
<dbReference type="Proteomes" id="UP000006552">
    <property type="component" value="Chromosome"/>
</dbReference>
<dbReference type="GO" id="GO:0005829">
    <property type="term" value="C:cytosol"/>
    <property type="evidence" value="ECO:0007669"/>
    <property type="project" value="TreeGrafter"/>
</dbReference>
<dbReference type="GO" id="GO:0004151">
    <property type="term" value="F:dihydroorotase activity"/>
    <property type="evidence" value="ECO:0007669"/>
    <property type="project" value="UniProtKB-UniRule"/>
</dbReference>
<dbReference type="GO" id="GO:0008270">
    <property type="term" value="F:zinc ion binding"/>
    <property type="evidence" value="ECO:0007669"/>
    <property type="project" value="UniProtKB-UniRule"/>
</dbReference>
<dbReference type="GO" id="GO:0006207">
    <property type="term" value="P:'de novo' pyrimidine nucleobase biosynthetic process"/>
    <property type="evidence" value="ECO:0007669"/>
    <property type="project" value="TreeGrafter"/>
</dbReference>
<dbReference type="GO" id="GO:0044205">
    <property type="term" value="P:'de novo' UMP biosynthetic process"/>
    <property type="evidence" value="ECO:0007669"/>
    <property type="project" value="UniProtKB-UniRule"/>
</dbReference>
<dbReference type="CDD" id="cd01294">
    <property type="entry name" value="DHOase"/>
    <property type="match status" value="1"/>
</dbReference>
<dbReference type="FunFam" id="3.20.20.140:FF:000006">
    <property type="entry name" value="Dihydroorotase"/>
    <property type="match status" value="1"/>
</dbReference>
<dbReference type="Gene3D" id="3.20.20.140">
    <property type="entry name" value="Metal-dependent hydrolases"/>
    <property type="match status" value="1"/>
</dbReference>
<dbReference type="HAMAP" id="MF_00219">
    <property type="entry name" value="PyrC_classII"/>
    <property type="match status" value="1"/>
</dbReference>
<dbReference type="InterPro" id="IPR006680">
    <property type="entry name" value="Amidohydro-rel"/>
</dbReference>
<dbReference type="InterPro" id="IPR004721">
    <property type="entry name" value="DHOdimr"/>
</dbReference>
<dbReference type="InterPro" id="IPR002195">
    <property type="entry name" value="Dihydroorotase_CS"/>
</dbReference>
<dbReference type="InterPro" id="IPR032466">
    <property type="entry name" value="Metal_Hydrolase"/>
</dbReference>
<dbReference type="NCBIfam" id="TIGR00856">
    <property type="entry name" value="pyrC_dimer"/>
    <property type="match status" value="1"/>
</dbReference>
<dbReference type="PANTHER" id="PTHR43137">
    <property type="entry name" value="DIHYDROOROTASE"/>
    <property type="match status" value="1"/>
</dbReference>
<dbReference type="PANTHER" id="PTHR43137:SF1">
    <property type="entry name" value="DIHYDROOROTASE"/>
    <property type="match status" value="1"/>
</dbReference>
<dbReference type="Pfam" id="PF01979">
    <property type="entry name" value="Amidohydro_1"/>
    <property type="match status" value="1"/>
</dbReference>
<dbReference type="PIRSF" id="PIRSF001237">
    <property type="entry name" value="DHOdimr"/>
    <property type="match status" value="1"/>
</dbReference>
<dbReference type="SUPFAM" id="SSF51556">
    <property type="entry name" value="Metallo-dependent hydrolases"/>
    <property type="match status" value="1"/>
</dbReference>
<dbReference type="PROSITE" id="PS00482">
    <property type="entry name" value="DIHYDROOROTASE_1"/>
    <property type="match status" value="1"/>
</dbReference>
<dbReference type="PROSITE" id="PS00483">
    <property type="entry name" value="DIHYDROOROTASE_2"/>
    <property type="match status" value="1"/>
</dbReference>
<comment type="function">
    <text evidence="1">Catalyzes the reversible cyclization of carbamoyl aspartate to dihydroorotate.</text>
</comment>
<comment type="catalytic activity">
    <reaction evidence="1">
        <text>(S)-dihydroorotate + H2O = N-carbamoyl-L-aspartate + H(+)</text>
        <dbReference type="Rhea" id="RHEA:24296"/>
        <dbReference type="ChEBI" id="CHEBI:15377"/>
        <dbReference type="ChEBI" id="CHEBI:15378"/>
        <dbReference type="ChEBI" id="CHEBI:30864"/>
        <dbReference type="ChEBI" id="CHEBI:32814"/>
        <dbReference type="EC" id="3.5.2.3"/>
    </reaction>
</comment>
<comment type="cofactor">
    <cofactor evidence="1">
        <name>Zn(2+)</name>
        <dbReference type="ChEBI" id="CHEBI:29105"/>
    </cofactor>
    <text evidence="1">Binds 2 Zn(2+) ions per subunit.</text>
</comment>
<comment type="pathway">
    <text evidence="1">Pyrimidine metabolism; UMP biosynthesis via de novo pathway; (S)-dihydroorotate from bicarbonate: step 3/3.</text>
</comment>
<comment type="subunit">
    <text evidence="1">Homodimer.</text>
</comment>
<comment type="similarity">
    <text evidence="1">Belongs to the metallo-dependent hydrolases superfamily. DHOase family. Class II DHOase subfamily.</text>
</comment>
<name>PYRC_AROAE</name>